<dbReference type="EC" id="3.1.-.-" evidence="1"/>
<dbReference type="EMBL" id="CP000736">
    <property type="protein sequence ID" value="ABR51888.1"/>
    <property type="molecule type" value="Genomic_DNA"/>
</dbReference>
<dbReference type="SMR" id="A6U0C0"/>
<dbReference type="KEGG" id="sah:SaurJH1_1032"/>
<dbReference type="HOGENOM" id="CLU_132020_0_0_9"/>
<dbReference type="GO" id="GO:0016788">
    <property type="term" value="F:hydrolase activity, acting on ester bonds"/>
    <property type="evidence" value="ECO:0007669"/>
    <property type="project" value="UniProtKB-UniRule"/>
</dbReference>
<dbReference type="Gene3D" id="3.90.1140.10">
    <property type="entry name" value="Cyclic phosphodiesterase"/>
    <property type="match status" value="1"/>
</dbReference>
<dbReference type="HAMAP" id="MF_01444">
    <property type="entry name" value="2H_phosphoesterase_YjcG"/>
    <property type="match status" value="1"/>
</dbReference>
<dbReference type="InterPro" id="IPR050580">
    <property type="entry name" value="2H_phosphoesterase_YjcG-like"/>
</dbReference>
<dbReference type="InterPro" id="IPR009097">
    <property type="entry name" value="Cyclic_Pdiesterase"/>
</dbReference>
<dbReference type="InterPro" id="IPR022932">
    <property type="entry name" value="YjcG"/>
</dbReference>
<dbReference type="NCBIfam" id="NF010223">
    <property type="entry name" value="PRK13679.1"/>
    <property type="match status" value="1"/>
</dbReference>
<dbReference type="PANTHER" id="PTHR40037:SF1">
    <property type="entry name" value="PHOSPHOESTERASE SAOUHSC_00951-RELATED"/>
    <property type="match status" value="1"/>
</dbReference>
<dbReference type="PANTHER" id="PTHR40037">
    <property type="entry name" value="PHOSPHOESTERASE YJCG-RELATED"/>
    <property type="match status" value="1"/>
</dbReference>
<dbReference type="Pfam" id="PF13563">
    <property type="entry name" value="2_5_RNA_ligase2"/>
    <property type="match status" value="1"/>
</dbReference>
<dbReference type="SUPFAM" id="SSF55144">
    <property type="entry name" value="LigT-like"/>
    <property type="match status" value="1"/>
</dbReference>
<reference key="1">
    <citation type="submission" date="2007-06" db="EMBL/GenBank/DDBJ databases">
        <title>Complete sequence of chromosome of Staphylococcus aureus subsp. aureus JH1.</title>
        <authorList>
            <consortium name="US DOE Joint Genome Institute"/>
            <person name="Copeland A."/>
            <person name="Lucas S."/>
            <person name="Lapidus A."/>
            <person name="Barry K."/>
            <person name="Detter J.C."/>
            <person name="Glavina del Rio T."/>
            <person name="Hammon N."/>
            <person name="Israni S."/>
            <person name="Dalin E."/>
            <person name="Tice H."/>
            <person name="Pitluck S."/>
            <person name="Chain P."/>
            <person name="Malfatti S."/>
            <person name="Shin M."/>
            <person name="Vergez L."/>
            <person name="Schmutz J."/>
            <person name="Larimer F."/>
            <person name="Land M."/>
            <person name="Hauser L."/>
            <person name="Kyrpides N."/>
            <person name="Ivanova N."/>
            <person name="Tomasz A."/>
            <person name="Richardson P."/>
        </authorList>
    </citation>
    <scope>NUCLEOTIDE SEQUENCE [LARGE SCALE GENOMIC DNA]</scope>
    <source>
        <strain>JH1</strain>
    </source>
</reference>
<organism>
    <name type="scientific">Staphylococcus aureus (strain JH1)</name>
    <dbReference type="NCBI Taxonomy" id="359787"/>
    <lineage>
        <taxon>Bacteria</taxon>
        <taxon>Bacillati</taxon>
        <taxon>Bacillota</taxon>
        <taxon>Bacilli</taxon>
        <taxon>Bacillales</taxon>
        <taxon>Staphylococcaceae</taxon>
        <taxon>Staphylococcus</taxon>
    </lineage>
</organism>
<evidence type="ECO:0000255" key="1">
    <source>
        <dbReference type="HAMAP-Rule" id="MF_01444"/>
    </source>
</evidence>
<proteinExistence type="inferred from homology"/>
<keyword id="KW-0378">Hydrolase</keyword>
<protein>
    <recommendedName>
        <fullName evidence="1">Putative phosphoesterase SaurJH1_1032</fullName>
        <ecNumber evidence="1">3.1.-.-</ecNumber>
    </recommendedName>
</protein>
<accession>A6U0C0</accession>
<feature type="chain" id="PRO_1000087463" description="Putative phosphoesterase SaurJH1_1032">
    <location>
        <begin position="1"/>
        <end position="169"/>
    </location>
</feature>
<feature type="short sequence motif" description="HXTX 1" evidence="1">
    <location>
        <begin position="34"/>
        <end position="37"/>
    </location>
</feature>
<feature type="short sequence motif" description="HXTX 2" evidence="1">
    <location>
        <begin position="115"/>
        <end position="118"/>
    </location>
</feature>
<feature type="active site" description="Proton donor" evidence="1">
    <location>
        <position position="34"/>
    </location>
</feature>
<feature type="active site" description="Proton acceptor" evidence="1">
    <location>
        <position position="115"/>
    </location>
</feature>
<name>Y1032_STAA2</name>
<sequence length="169" mass="19327">MILGLALIPSKSFQEAVDSYRKRYDKQYSRIKPHVTIKAPFEIEDGDLDSVIEQVRARINGIPAVEVHATKASSFKPTNNVIYFKVAKTDDLEELFNRFNGEDFYGEAEHVFVPHFTIAQGLSSQEFEDIFGQVALAGVDHKEIIDELTLLRFDDDEDKWKVIETFKLA</sequence>
<gene>
    <name type="ordered locus">SaurJH1_1032</name>
</gene>
<comment type="similarity">
    <text evidence="1">Belongs to the 2H phosphoesterase superfamily. YjcG family.</text>
</comment>